<accession>P20247</accession>
<keyword id="KW-0903">Direct protein sequencing</keyword>
<keyword id="KW-0349">Heme</keyword>
<keyword id="KW-0408">Iron</keyword>
<keyword id="KW-0479">Metal-binding</keyword>
<keyword id="KW-0561">Oxygen transport</keyword>
<keyword id="KW-0813">Transport</keyword>
<organism>
    <name type="scientific">Torpedo marmorata</name>
    <name type="common">Marbled electric ray</name>
    <dbReference type="NCBI Taxonomy" id="7788"/>
    <lineage>
        <taxon>Eukaryota</taxon>
        <taxon>Metazoa</taxon>
        <taxon>Chordata</taxon>
        <taxon>Craniata</taxon>
        <taxon>Vertebrata</taxon>
        <taxon>Chondrichthyes</taxon>
        <taxon>Elasmobranchii</taxon>
        <taxon>Batoidea</taxon>
        <taxon>Torpediniformes</taxon>
        <taxon>Torpedinidae</taxon>
        <taxon>Torpedo</taxon>
    </lineage>
</organism>
<reference key="1">
    <citation type="journal article" date="1989" name="Biol. Chem. Hoppe-Seyler">
        <title>The primary structure of electric ray hemoglobin (Torpedo marmorata). Bohr effect and phosphate interaction.</title>
        <authorList>
            <person name="Huber F."/>
            <person name="Braunitzer G."/>
        </authorList>
    </citation>
    <scope>PROTEIN SEQUENCE</scope>
</reference>
<feature type="chain" id="PRO_0000053132" description="Hemoglobin subunit beta-2">
    <location>
        <begin position="1"/>
        <end position="142"/>
    </location>
</feature>
<feature type="domain" description="Globin" evidence="1">
    <location>
        <begin position="2"/>
        <end position="142"/>
    </location>
</feature>
<feature type="binding site" description="distal binding residue" evidence="1">
    <location>
        <position position="59"/>
    </location>
    <ligand>
        <name>heme b</name>
        <dbReference type="ChEBI" id="CHEBI:60344"/>
    </ligand>
    <ligandPart>
        <name>Fe</name>
        <dbReference type="ChEBI" id="CHEBI:18248"/>
    </ligandPart>
</feature>
<feature type="binding site" description="proximal binding residue" evidence="1">
    <location>
        <position position="88"/>
    </location>
    <ligand>
        <name>heme b</name>
        <dbReference type="ChEBI" id="CHEBI:60344"/>
    </ligand>
    <ligandPart>
        <name>Fe</name>
        <dbReference type="ChEBI" id="CHEBI:18248"/>
    </ligandPart>
</feature>
<name>HBB2_TORMA</name>
<gene>
    <name type="primary">HBB2</name>
</gene>
<sequence length="142" mass="16089">VSLTDEEKHLIQHIWSNVNVVEITAKALERVFYVYPWTTRLFTSFNHNFKASDKGVHDHAVNVSKALSAAIGDLHNVNKNFSALSTKHQKKLGVDTSNFMLLGQAFLVELAAFEKDKFTPQYHKAALKLFEVVTEALSCQYH</sequence>
<protein>
    <recommendedName>
        <fullName>Hemoglobin subunit beta-2</fullName>
    </recommendedName>
    <alternativeName>
        <fullName>Beta-2-globin</fullName>
    </alternativeName>
    <alternativeName>
        <fullName>Hemoglobin beta-2 chain</fullName>
    </alternativeName>
</protein>
<proteinExistence type="evidence at protein level"/>
<evidence type="ECO:0000255" key="1">
    <source>
        <dbReference type="PROSITE-ProRule" id="PRU00238"/>
    </source>
</evidence>
<comment type="function">
    <text>Involved in oxygen transport from the lung to the various peripheral tissues.</text>
</comment>
<comment type="subunit">
    <text>Heterotetramer of two alpha chains and two beta chains.</text>
</comment>
<comment type="tissue specificity">
    <text>Red blood cells.</text>
</comment>
<comment type="similarity">
    <text evidence="1">Belongs to the globin family.</text>
</comment>
<dbReference type="PIR" id="S05421">
    <property type="entry name" value="HBRYM"/>
</dbReference>
<dbReference type="SMR" id="P20247"/>
<dbReference type="GO" id="GO:0072562">
    <property type="term" value="C:blood microparticle"/>
    <property type="evidence" value="ECO:0007669"/>
    <property type="project" value="TreeGrafter"/>
</dbReference>
<dbReference type="GO" id="GO:0031838">
    <property type="term" value="C:haptoglobin-hemoglobin complex"/>
    <property type="evidence" value="ECO:0007669"/>
    <property type="project" value="TreeGrafter"/>
</dbReference>
<dbReference type="GO" id="GO:0005833">
    <property type="term" value="C:hemoglobin complex"/>
    <property type="evidence" value="ECO:0007669"/>
    <property type="project" value="TreeGrafter"/>
</dbReference>
<dbReference type="GO" id="GO:0031720">
    <property type="term" value="F:haptoglobin binding"/>
    <property type="evidence" value="ECO:0007669"/>
    <property type="project" value="TreeGrafter"/>
</dbReference>
<dbReference type="GO" id="GO:0020037">
    <property type="term" value="F:heme binding"/>
    <property type="evidence" value="ECO:0007669"/>
    <property type="project" value="InterPro"/>
</dbReference>
<dbReference type="GO" id="GO:0046872">
    <property type="term" value="F:metal ion binding"/>
    <property type="evidence" value="ECO:0007669"/>
    <property type="project" value="UniProtKB-KW"/>
</dbReference>
<dbReference type="GO" id="GO:0043177">
    <property type="term" value="F:organic acid binding"/>
    <property type="evidence" value="ECO:0007669"/>
    <property type="project" value="TreeGrafter"/>
</dbReference>
<dbReference type="GO" id="GO:0019825">
    <property type="term" value="F:oxygen binding"/>
    <property type="evidence" value="ECO:0007669"/>
    <property type="project" value="InterPro"/>
</dbReference>
<dbReference type="GO" id="GO:0005344">
    <property type="term" value="F:oxygen carrier activity"/>
    <property type="evidence" value="ECO:0007669"/>
    <property type="project" value="UniProtKB-KW"/>
</dbReference>
<dbReference type="GO" id="GO:0004601">
    <property type="term" value="F:peroxidase activity"/>
    <property type="evidence" value="ECO:0007669"/>
    <property type="project" value="TreeGrafter"/>
</dbReference>
<dbReference type="GO" id="GO:0042744">
    <property type="term" value="P:hydrogen peroxide catabolic process"/>
    <property type="evidence" value="ECO:0007669"/>
    <property type="project" value="TreeGrafter"/>
</dbReference>
<dbReference type="Gene3D" id="1.10.490.10">
    <property type="entry name" value="Globins"/>
    <property type="match status" value="1"/>
</dbReference>
<dbReference type="InterPro" id="IPR000971">
    <property type="entry name" value="Globin"/>
</dbReference>
<dbReference type="InterPro" id="IPR009050">
    <property type="entry name" value="Globin-like_sf"/>
</dbReference>
<dbReference type="InterPro" id="IPR012292">
    <property type="entry name" value="Globin/Proto"/>
</dbReference>
<dbReference type="InterPro" id="IPR050056">
    <property type="entry name" value="Hemoglobin_oxygen_transport"/>
</dbReference>
<dbReference type="PANTHER" id="PTHR11442">
    <property type="entry name" value="HEMOGLOBIN FAMILY MEMBER"/>
    <property type="match status" value="1"/>
</dbReference>
<dbReference type="PANTHER" id="PTHR11442:SF7">
    <property type="entry name" value="HEMOGLOBIN SUBUNIT EPSILON"/>
    <property type="match status" value="1"/>
</dbReference>
<dbReference type="Pfam" id="PF00042">
    <property type="entry name" value="Globin"/>
    <property type="match status" value="1"/>
</dbReference>
<dbReference type="SUPFAM" id="SSF46458">
    <property type="entry name" value="Globin-like"/>
    <property type="match status" value="1"/>
</dbReference>
<dbReference type="PROSITE" id="PS01033">
    <property type="entry name" value="GLOBIN"/>
    <property type="match status" value="1"/>
</dbReference>